<sequence length="151" mass="16013">MKQIDLKILDGRIGNEFPLPAYATEGSAGLDLRALTESALTVAPGQTVLIPTGISIYIADPNLAAVILPRSGLGHKNGIVLGNLVGLIDSDYQGPLMVSLWNRSDKPFTVEVGDRIAQLVFVPVVQASFNIVNDFAQTERGEGGFGHSGKQ</sequence>
<protein>
    <recommendedName>
        <fullName evidence="1">Deoxyuridine 5'-triphosphate nucleotidohydrolase</fullName>
        <shortName evidence="1">dUTPase</shortName>
        <ecNumber evidence="1">3.6.1.23</ecNumber>
    </recommendedName>
    <alternativeName>
        <fullName evidence="1">dUTP pyrophosphatase</fullName>
    </alternativeName>
</protein>
<proteinExistence type="inferred from homology"/>
<evidence type="ECO:0000255" key="1">
    <source>
        <dbReference type="HAMAP-Rule" id="MF_00116"/>
    </source>
</evidence>
<gene>
    <name evidence="1" type="primary">dut</name>
    <name type="ordered locus">APJL_2015</name>
</gene>
<accession>B0BTZ3</accession>
<keyword id="KW-0378">Hydrolase</keyword>
<keyword id="KW-0460">Magnesium</keyword>
<keyword id="KW-0479">Metal-binding</keyword>
<keyword id="KW-0546">Nucleotide metabolism</keyword>
<organism>
    <name type="scientific">Actinobacillus pleuropneumoniae serotype 3 (strain JL03)</name>
    <dbReference type="NCBI Taxonomy" id="434271"/>
    <lineage>
        <taxon>Bacteria</taxon>
        <taxon>Pseudomonadati</taxon>
        <taxon>Pseudomonadota</taxon>
        <taxon>Gammaproteobacteria</taxon>
        <taxon>Pasteurellales</taxon>
        <taxon>Pasteurellaceae</taxon>
        <taxon>Actinobacillus</taxon>
    </lineage>
</organism>
<dbReference type="EC" id="3.6.1.23" evidence="1"/>
<dbReference type="EMBL" id="CP000687">
    <property type="protein sequence ID" value="ABY70560.1"/>
    <property type="molecule type" value="Genomic_DNA"/>
</dbReference>
<dbReference type="RefSeq" id="WP_005599752.1">
    <property type="nucleotide sequence ID" value="NC_010278.1"/>
</dbReference>
<dbReference type="SMR" id="B0BTZ3"/>
<dbReference type="GeneID" id="48600269"/>
<dbReference type="KEGG" id="apj:APJL_2015"/>
<dbReference type="HOGENOM" id="CLU_068508_1_1_6"/>
<dbReference type="UniPathway" id="UPA00610">
    <property type="reaction ID" value="UER00666"/>
</dbReference>
<dbReference type="Proteomes" id="UP000008547">
    <property type="component" value="Chromosome"/>
</dbReference>
<dbReference type="GO" id="GO:0004170">
    <property type="term" value="F:dUTP diphosphatase activity"/>
    <property type="evidence" value="ECO:0007669"/>
    <property type="project" value="UniProtKB-UniRule"/>
</dbReference>
<dbReference type="GO" id="GO:0000287">
    <property type="term" value="F:magnesium ion binding"/>
    <property type="evidence" value="ECO:0007669"/>
    <property type="project" value="UniProtKB-UniRule"/>
</dbReference>
<dbReference type="GO" id="GO:0006226">
    <property type="term" value="P:dUMP biosynthetic process"/>
    <property type="evidence" value="ECO:0007669"/>
    <property type="project" value="UniProtKB-UniRule"/>
</dbReference>
<dbReference type="GO" id="GO:0046081">
    <property type="term" value="P:dUTP catabolic process"/>
    <property type="evidence" value="ECO:0007669"/>
    <property type="project" value="InterPro"/>
</dbReference>
<dbReference type="CDD" id="cd07557">
    <property type="entry name" value="trimeric_dUTPase"/>
    <property type="match status" value="1"/>
</dbReference>
<dbReference type="FunFam" id="2.70.40.10:FF:000002">
    <property type="entry name" value="dUTP diphosphatase"/>
    <property type="match status" value="1"/>
</dbReference>
<dbReference type="Gene3D" id="2.70.40.10">
    <property type="match status" value="1"/>
</dbReference>
<dbReference type="HAMAP" id="MF_00116">
    <property type="entry name" value="dUTPase_bact"/>
    <property type="match status" value="1"/>
</dbReference>
<dbReference type="InterPro" id="IPR008181">
    <property type="entry name" value="dUTPase"/>
</dbReference>
<dbReference type="InterPro" id="IPR029054">
    <property type="entry name" value="dUTPase-like"/>
</dbReference>
<dbReference type="InterPro" id="IPR036157">
    <property type="entry name" value="dUTPase-like_sf"/>
</dbReference>
<dbReference type="InterPro" id="IPR033704">
    <property type="entry name" value="dUTPase_trimeric"/>
</dbReference>
<dbReference type="NCBIfam" id="TIGR00576">
    <property type="entry name" value="dut"/>
    <property type="match status" value="1"/>
</dbReference>
<dbReference type="NCBIfam" id="NF001862">
    <property type="entry name" value="PRK00601.1"/>
    <property type="match status" value="1"/>
</dbReference>
<dbReference type="PANTHER" id="PTHR11241">
    <property type="entry name" value="DEOXYURIDINE 5'-TRIPHOSPHATE NUCLEOTIDOHYDROLASE"/>
    <property type="match status" value="1"/>
</dbReference>
<dbReference type="PANTHER" id="PTHR11241:SF0">
    <property type="entry name" value="DEOXYURIDINE 5'-TRIPHOSPHATE NUCLEOTIDOHYDROLASE"/>
    <property type="match status" value="1"/>
</dbReference>
<dbReference type="Pfam" id="PF00692">
    <property type="entry name" value="dUTPase"/>
    <property type="match status" value="1"/>
</dbReference>
<dbReference type="SUPFAM" id="SSF51283">
    <property type="entry name" value="dUTPase-like"/>
    <property type="match status" value="1"/>
</dbReference>
<comment type="function">
    <text evidence="1">This enzyme is involved in nucleotide metabolism: it produces dUMP, the immediate precursor of thymidine nucleotides and it decreases the intracellular concentration of dUTP so that uracil cannot be incorporated into DNA.</text>
</comment>
<comment type="catalytic activity">
    <reaction evidence="1">
        <text>dUTP + H2O = dUMP + diphosphate + H(+)</text>
        <dbReference type="Rhea" id="RHEA:10248"/>
        <dbReference type="ChEBI" id="CHEBI:15377"/>
        <dbReference type="ChEBI" id="CHEBI:15378"/>
        <dbReference type="ChEBI" id="CHEBI:33019"/>
        <dbReference type="ChEBI" id="CHEBI:61555"/>
        <dbReference type="ChEBI" id="CHEBI:246422"/>
        <dbReference type="EC" id="3.6.1.23"/>
    </reaction>
</comment>
<comment type="cofactor">
    <cofactor evidence="1">
        <name>Mg(2+)</name>
        <dbReference type="ChEBI" id="CHEBI:18420"/>
    </cofactor>
</comment>
<comment type="pathway">
    <text evidence="1">Pyrimidine metabolism; dUMP biosynthesis; dUMP from dCTP (dUTP route): step 2/2.</text>
</comment>
<comment type="similarity">
    <text evidence="1">Belongs to the dUTPase family.</text>
</comment>
<name>DUT_ACTPJ</name>
<feature type="chain" id="PRO_1000094940" description="Deoxyuridine 5'-triphosphate nucleotidohydrolase">
    <location>
        <begin position="1"/>
        <end position="151"/>
    </location>
</feature>
<feature type="binding site" evidence="1">
    <location>
        <begin position="70"/>
        <end position="72"/>
    </location>
    <ligand>
        <name>substrate</name>
    </ligand>
</feature>
<feature type="binding site" evidence="1">
    <location>
        <position position="83"/>
    </location>
    <ligand>
        <name>substrate</name>
    </ligand>
</feature>
<feature type="binding site" evidence="1">
    <location>
        <begin position="87"/>
        <end position="89"/>
    </location>
    <ligand>
        <name>substrate</name>
    </ligand>
</feature>
<feature type="binding site" evidence="1">
    <location>
        <position position="97"/>
    </location>
    <ligand>
        <name>substrate</name>
    </ligand>
</feature>
<reference key="1">
    <citation type="journal article" date="2008" name="PLoS ONE">
        <title>Genome biology of Actinobacillus pleuropneumoniae JL03, an isolate of serotype 3 prevalent in China.</title>
        <authorList>
            <person name="Xu Z."/>
            <person name="Zhou Y."/>
            <person name="Li L."/>
            <person name="Zhou R."/>
            <person name="Xiao S."/>
            <person name="Wan Y."/>
            <person name="Zhang S."/>
            <person name="Wang K."/>
            <person name="Li W."/>
            <person name="Li L."/>
            <person name="Jin H."/>
            <person name="Kang M."/>
            <person name="Dalai B."/>
            <person name="Li T."/>
            <person name="Liu L."/>
            <person name="Cheng Y."/>
            <person name="Zhang L."/>
            <person name="Xu T."/>
            <person name="Zheng H."/>
            <person name="Pu S."/>
            <person name="Wang B."/>
            <person name="Gu W."/>
            <person name="Zhang X.L."/>
            <person name="Zhu G.-F."/>
            <person name="Wang S."/>
            <person name="Zhao G.-P."/>
            <person name="Chen H."/>
        </authorList>
    </citation>
    <scope>NUCLEOTIDE SEQUENCE [LARGE SCALE GENOMIC DNA]</scope>
    <source>
        <strain>JL03</strain>
    </source>
</reference>